<evidence type="ECO:0000250" key="1"/>
<evidence type="ECO:0000250" key="2">
    <source>
        <dbReference type="UniProtKB" id="O97944"/>
    </source>
</evidence>
<evidence type="ECO:0000250" key="3">
    <source>
        <dbReference type="UniProtKB" id="P02663"/>
    </source>
</evidence>
<evidence type="ECO:0000256" key="4">
    <source>
        <dbReference type="SAM" id="MobiDB-lite"/>
    </source>
</evidence>
<evidence type="ECO:0000305" key="5"/>
<keyword id="KW-0494">Milk protein</keyword>
<keyword id="KW-0597">Phosphoprotein</keyword>
<keyword id="KW-1185">Reference proteome</keyword>
<keyword id="KW-0964">Secreted</keyword>
<keyword id="KW-0732">Signal</keyword>
<gene>
    <name type="primary">CSN1S2</name>
</gene>
<reference key="1">
    <citation type="journal article" date="1992" name="Anim. Genet.">
        <title>The sequence of porcine alpha s2-casein cDNA.</title>
        <authorList>
            <person name="Alexander L.J."/>
            <person name="Das Gupta N.A."/>
            <person name="Beattie C.W."/>
        </authorList>
    </citation>
    <scope>NUCLEOTIDE SEQUENCE [MRNA]</scope>
    <source>
        <tissue>Mammary gland</tissue>
    </source>
</reference>
<accession>P39036</accession>
<comment type="function">
    <text>Important role in the capacity of milk to transport calcium phosphate.</text>
</comment>
<comment type="subcellular location">
    <subcellularLocation>
        <location>Secreted</location>
    </subcellularLocation>
</comment>
<comment type="tissue specificity">
    <text>Mammary gland specific. Secreted in milk.</text>
</comment>
<comment type="similarity">
    <text evidence="5">Belongs to the alpha-casein family.</text>
</comment>
<name>CASA2_PIG</name>
<proteinExistence type="evidence at transcript level"/>
<dbReference type="EMBL" id="X54975">
    <property type="protein sequence ID" value="CAA38719.1"/>
    <property type="molecule type" value="mRNA"/>
</dbReference>
<dbReference type="RefSeq" id="NP_001004030.1">
    <property type="nucleotide sequence ID" value="NM_001004030.1"/>
</dbReference>
<dbReference type="RefSeq" id="XP_005656642.1">
    <property type="nucleotide sequence ID" value="XM_005656585.1"/>
</dbReference>
<dbReference type="RefSeq" id="XP_020956156.1">
    <property type="nucleotide sequence ID" value="XM_021100497.1"/>
</dbReference>
<dbReference type="SMR" id="P39036"/>
<dbReference type="PaxDb" id="9823-ENSSSCP00000009878"/>
<dbReference type="PeptideAtlas" id="P39036"/>
<dbReference type="GeneID" id="445515"/>
<dbReference type="KEGG" id="ssc:445515"/>
<dbReference type="CTD" id="282209"/>
<dbReference type="eggNOG" id="ENOG502TDWX">
    <property type="taxonomic scope" value="Eukaryota"/>
</dbReference>
<dbReference type="HOGENOM" id="CLU_121717_0_0_1"/>
<dbReference type="InParanoid" id="P39036"/>
<dbReference type="OrthoDB" id="9564348at2759"/>
<dbReference type="TreeFam" id="TF339561"/>
<dbReference type="ChiTaRS" id="CSN1S2">
    <property type="organism name" value="pig"/>
</dbReference>
<dbReference type="Proteomes" id="UP000008227">
    <property type="component" value="Unplaced"/>
</dbReference>
<dbReference type="Proteomes" id="UP000314985">
    <property type="component" value="Unplaced"/>
</dbReference>
<dbReference type="Proteomes" id="UP000694570">
    <property type="component" value="Unplaced"/>
</dbReference>
<dbReference type="Proteomes" id="UP000694571">
    <property type="component" value="Unplaced"/>
</dbReference>
<dbReference type="Proteomes" id="UP000694720">
    <property type="component" value="Unplaced"/>
</dbReference>
<dbReference type="Proteomes" id="UP000694722">
    <property type="component" value="Unplaced"/>
</dbReference>
<dbReference type="Proteomes" id="UP000694723">
    <property type="component" value="Unplaced"/>
</dbReference>
<dbReference type="Proteomes" id="UP000694724">
    <property type="component" value="Unplaced"/>
</dbReference>
<dbReference type="Proteomes" id="UP000694725">
    <property type="component" value="Unplaced"/>
</dbReference>
<dbReference type="Proteomes" id="UP000694726">
    <property type="component" value="Unplaced"/>
</dbReference>
<dbReference type="Proteomes" id="UP000694727">
    <property type="component" value="Unplaced"/>
</dbReference>
<dbReference type="Proteomes" id="UP000694728">
    <property type="component" value="Unplaced"/>
</dbReference>
<dbReference type="GO" id="GO:0005615">
    <property type="term" value="C:extracellular space"/>
    <property type="evidence" value="ECO:0000318"/>
    <property type="project" value="GO_Central"/>
</dbReference>
<dbReference type="GO" id="GO:0042803">
    <property type="term" value="F:protein homodimerization activity"/>
    <property type="evidence" value="ECO:0000318"/>
    <property type="project" value="GO_Central"/>
</dbReference>
<dbReference type="GO" id="GO:0035375">
    <property type="term" value="F:zymogen binding"/>
    <property type="evidence" value="ECO:0000318"/>
    <property type="project" value="GO_Central"/>
</dbReference>
<dbReference type="InterPro" id="IPR011175">
    <property type="entry name" value="Alpha-s2_casein"/>
</dbReference>
<dbReference type="InterPro" id="IPR001588">
    <property type="entry name" value="Casein"/>
</dbReference>
<dbReference type="InterPro" id="IPR031305">
    <property type="entry name" value="Casein_CS"/>
</dbReference>
<dbReference type="PANTHER" id="PTHR16656">
    <property type="entry name" value="ALPHA-S2-CASEIN-LIKE B"/>
    <property type="match status" value="1"/>
</dbReference>
<dbReference type="PANTHER" id="PTHR16656:SF5">
    <property type="entry name" value="ALPHA-S2-CASEIN-LIKE B"/>
    <property type="match status" value="1"/>
</dbReference>
<dbReference type="Pfam" id="PF00363">
    <property type="entry name" value="Casein"/>
    <property type="match status" value="1"/>
</dbReference>
<dbReference type="PIRSF" id="PIRSF002371">
    <property type="entry name" value="Alpha-s2-casein"/>
    <property type="match status" value="1"/>
</dbReference>
<dbReference type="PROSITE" id="PS00306">
    <property type="entry name" value="CASEIN_ALPHA_BETA"/>
    <property type="match status" value="1"/>
</dbReference>
<feature type="signal peptide" evidence="1">
    <location>
        <begin position="1"/>
        <end position="15"/>
    </location>
</feature>
<feature type="chain" id="PRO_0000004464" description="Alpha-S2-casein">
    <location>
        <begin position="16"/>
        <end position="235"/>
    </location>
</feature>
<feature type="region of interest" description="Disordered" evidence="4">
    <location>
        <begin position="144"/>
        <end position="163"/>
    </location>
</feature>
<feature type="compositionally biased region" description="Polar residues" evidence="4">
    <location>
        <begin position="144"/>
        <end position="158"/>
    </location>
</feature>
<feature type="modified residue" description="Phosphoserine" evidence="3">
    <location>
        <position position="23"/>
    </location>
</feature>
<feature type="modified residue" description="Phosphoserine" evidence="3">
    <location>
        <position position="24"/>
    </location>
</feature>
<feature type="modified residue" description="Phosphoserine" evidence="3">
    <location>
        <position position="25"/>
    </location>
</feature>
<feature type="modified residue" description="Phosphoserine" evidence="3">
    <location>
        <position position="28"/>
    </location>
</feature>
<feature type="modified residue" description="Phosphoserine" evidence="3">
    <location>
        <position position="47"/>
    </location>
</feature>
<feature type="modified residue" description="Phosphoserine" evidence="3">
    <location>
        <position position="72"/>
    </location>
</feature>
<feature type="modified residue" description="Phosphoserine" evidence="3">
    <location>
        <position position="73"/>
    </location>
</feature>
<feature type="modified residue" description="Phosphoserine" evidence="3">
    <location>
        <position position="74"/>
    </location>
</feature>
<feature type="modified residue" description="Phosphoserine" evidence="3">
    <location>
        <position position="77"/>
    </location>
</feature>
<feature type="modified residue" description="Phosphoserine" evidence="2">
    <location>
        <position position="147"/>
    </location>
</feature>
<feature type="modified residue" description="Phosphoserine" evidence="2">
    <location>
        <position position="149"/>
    </location>
</feature>
<feature type="modified residue" description="Phosphoserine" evidence="3">
    <location>
        <position position="168"/>
    </location>
</feature>
<sequence length="235" mass="27570">MKFFIFTCLLAVAFAKHEMEHVSSSEESINISQEKYKQEKNVINHPSKEDICATSCEEAVRNIKEVGYASSSSSEESVDIPAENVKVTVEDKHYLKQLEKISQFYQKFPQYLQALYQAQIVMNPWDQTKTSAYPFIPTVIQSGEELSTSEEPVSSSQEENTKTVDMESMEEFTKKTELTEEEKNRIKFLNKIKQYYQKFTWPQYIKTVHQKQKAMKPWNHIKTNSYQIIPNLRYF</sequence>
<protein>
    <recommendedName>
        <fullName>Alpha-S2-casein</fullName>
    </recommendedName>
</protein>
<organism>
    <name type="scientific">Sus scrofa</name>
    <name type="common">Pig</name>
    <dbReference type="NCBI Taxonomy" id="9823"/>
    <lineage>
        <taxon>Eukaryota</taxon>
        <taxon>Metazoa</taxon>
        <taxon>Chordata</taxon>
        <taxon>Craniata</taxon>
        <taxon>Vertebrata</taxon>
        <taxon>Euteleostomi</taxon>
        <taxon>Mammalia</taxon>
        <taxon>Eutheria</taxon>
        <taxon>Laurasiatheria</taxon>
        <taxon>Artiodactyla</taxon>
        <taxon>Suina</taxon>
        <taxon>Suidae</taxon>
        <taxon>Sus</taxon>
    </lineage>
</organism>